<name>PLH25_FORAG</name>
<protein>
    <recommendedName>
        <fullName evidence="4">SusD-like protein P25</fullName>
        <shortName evidence="4">P25_SusD</shortName>
    </recommendedName>
    <alternativeName>
        <fullName evidence="4">Polysaccharide utilization locus H protein P25</fullName>
        <shortName>PUL H protein P25</shortName>
    </alternativeName>
</protein>
<keyword id="KW-0998">Cell outer membrane</keyword>
<keyword id="KW-0449">Lipoprotein</keyword>
<keyword id="KW-0472">Membrane</keyword>
<keyword id="KW-0564">Palmitate</keyword>
<keyword id="KW-1185">Reference proteome</keyword>
<keyword id="KW-0732">Signal</keyword>
<feature type="signal peptide" evidence="2">
    <location>
        <begin position="1"/>
        <end position="15"/>
    </location>
</feature>
<feature type="chain" id="PRO_0000448317" description="SusD-like protein P25">
    <location>
        <begin position="16"/>
        <end position="527"/>
    </location>
</feature>
<feature type="lipid moiety-binding region" description="N-palmitoyl cysteine" evidence="2">
    <location>
        <position position="16"/>
    </location>
</feature>
<feature type="lipid moiety-binding region" description="S-diacylglycerol cysteine" evidence="2">
    <location>
        <position position="16"/>
    </location>
</feature>
<evidence type="ECO:0000250" key="1">
    <source>
        <dbReference type="UniProtKB" id="Q8A1G2"/>
    </source>
</evidence>
<evidence type="ECO:0000255" key="2">
    <source>
        <dbReference type="PROSITE-ProRule" id="PRU00303"/>
    </source>
</evidence>
<evidence type="ECO:0000269" key="3">
    <source>
    </source>
</evidence>
<evidence type="ECO:0000303" key="4">
    <source>
    </source>
</evidence>
<evidence type="ECO:0000305" key="5"/>
<evidence type="ECO:0000305" key="6">
    <source>
    </source>
</evidence>
<gene>
    <name type="ORF">BN863_22140</name>
</gene>
<proteinExistence type="evidence at transcript level"/>
<dbReference type="EMBL" id="HG315671">
    <property type="protein sequence ID" value="CDF79926.1"/>
    <property type="molecule type" value="Genomic_DNA"/>
</dbReference>
<dbReference type="RefSeq" id="WP_038530518.1">
    <property type="nucleotide sequence ID" value="NZ_HG315671.1"/>
</dbReference>
<dbReference type="SMR" id="T2KNB8"/>
<dbReference type="STRING" id="1347342.BN863_22140"/>
<dbReference type="PATRIC" id="fig|1347342.6.peg.2221"/>
<dbReference type="eggNOG" id="COG0702">
    <property type="taxonomic scope" value="Bacteria"/>
</dbReference>
<dbReference type="HOGENOM" id="CLU_015553_1_1_10"/>
<dbReference type="OrthoDB" id="5694214at2"/>
<dbReference type="Proteomes" id="UP000016160">
    <property type="component" value="Chromosome"/>
</dbReference>
<dbReference type="GO" id="GO:0009279">
    <property type="term" value="C:cell outer membrane"/>
    <property type="evidence" value="ECO:0007669"/>
    <property type="project" value="UniProtKB-SubCell"/>
</dbReference>
<dbReference type="CDD" id="cd08977">
    <property type="entry name" value="SusD"/>
    <property type="match status" value="1"/>
</dbReference>
<dbReference type="Gene3D" id="1.25.40.390">
    <property type="match status" value="1"/>
</dbReference>
<dbReference type="InterPro" id="IPR033985">
    <property type="entry name" value="SusD-like_N"/>
</dbReference>
<dbReference type="InterPro" id="IPR012944">
    <property type="entry name" value="SusD_RagB_dom"/>
</dbReference>
<dbReference type="InterPro" id="IPR011990">
    <property type="entry name" value="TPR-like_helical_dom_sf"/>
</dbReference>
<dbReference type="Pfam" id="PF14322">
    <property type="entry name" value="SusD-like_3"/>
    <property type="match status" value="1"/>
</dbReference>
<dbReference type="Pfam" id="PF07980">
    <property type="entry name" value="SusD_RagB"/>
    <property type="match status" value="1"/>
</dbReference>
<dbReference type="SUPFAM" id="SSF48452">
    <property type="entry name" value="TPR-like"/>
    <property type="match status" value="1"/>
</dbReference>
<dbReference type="PROSITE" id="PS51257">
    <property type="entry name" value="PROKAR_LIPOPROTEIN"/>
    <property type="match status" value="1"/>
</dbReference>
<reference key="1">
    <citation type="journal article" date="2013" name="Appl. Environ. Microbiol.">
        <title>The genome of the alga-associated marine flavobacterium Formosa agariphila KMM 3901T reveals a broad potential for degradation of algal polysaccharides.</title>
        <authorList>
            <person name="Mann A.J."/>
            <person name="Hahnke R.L."/>
            <person name="Huang S."/>
            <person name="Werner J."/>
            <person name="Xing P."/>
            <person name="Barbeyron T."/>
            <person name="Huettel B."/>
            <person name="Stueber K."/>
            <person name="Reinhardt R."/>
            <person name="Harder J."/>
            <person name="Gloeckner F.O."/>
            <person name="Amann R.I."/>
            <person name="Teeling H."/>
        </authorList>
    </citation>
    <scope>NUCLEOTIDE SEQUENCE [LARGE SCALE GENOMIC DNA]</scope>
    <source>
        <strain>DSM 15362 / KCTC 12365 / LMG 23005 / KMM 3901 / M-2Alg 35-1</strain>
    </source>
</reference>
<reference key="2">
    <citation type="journal article" date="2019" name="Nat. Chem. Biol.">
        <title>A marine bacterial enzymatic cascade degrades the algal polysaccharide ulvan.</title>
        <authorList>
            <person name="Reisky L."/>
            <person name="Prechoux A."/>
            <person name="Zuehlke M.K."/>
            <person name="Baeumgen M."/>
            <person name="Robb C.S."/>
            <person name="Gerlach N."/>
            <person name="Roret T."/>
            <person name="Stanetty C."/>
            <person name="Larocque R."/>
            <person name="Michel G."/>
            <person name="Song T."/>
            <person name="Markert S."/>
            <person name="Unfried F."/>
            <person name="Mihovilovic M.D."/>
            <person name="Trautwein-Schult A."/>
            <person name="Becher D."/>
            <person name="Schweder T."/>
            <person name="Bornscheuer U.T."/>
            <person name="Hehemann J.H."/>
        </authorList>
    </citation>
    <scope>FUNCTION</scope>
    <scope>SUBCELLULAR LOCATION</scope>
    <scope>INDUCTION</scope>
</reference>
<comment type="function">
    <text evidence="1 6">Polysaccharide-binding protein probably involved in ulvan degradation (Probable). Ulvan is the main polysaccharide component of the Ulvales (green seaweed) cell wall. It is composed of disaccharide building blocks comprising 3-sulfated rhamnose (Rha3S) linked to D-glucuronic acid (GlcA), L-iduronic acid (IduA), or D-xylose (Xyl) (Probable). The SusD-like protein may mediate ulvan oligomer-binding before transport in the periplasm for further degradation (By similarity).</text>
</comment>
<comment type="subcellular location">
    <subcellularLocation>
        <location evidence="3">Cell outer membrane</location>
        <topology evidence="2">Lipid-anchor</topology>
    </subcellularLocation>
</comment>
<comment type="induction">
    <text evidence="3">By ulvan and rhamnose.</text>
</comment>
<comment type="similarity">
    <text evidence="5">Belongs to the SusD family.</text>
</comment>
<organism>
    <name type="scientific">Formosa agariphila (strain DSM 15362 / KCTC 12365 / LMG 23005 / KMM 3901 / M-2Alg 35-1)</name>
    <dbReference type="NCBI Taxonomy" id="1347342"/>
    <lineage>
        <taxon>Bacteria</taxon>
        <taxon>Pseudomonadati</taxon>
        <taxon>Bacteroidota</taxon>
        <taxon>Flavobacteriia</taxon>
        <taxon>Flavobacteriales</taxon>
        <taxon>Flavobacteriaceae</taxon>
        <taxon>Formosa</taxon>
    </lineage>
</organism>
<sequence>MKIQNIIVYVFLIFSCFSCEEFLEEDPRALIAPETFYQSESDVRQAVVGLYSILKNNSIYGQLGLDLFYDNGADIIEPNRSTNVVEPLGNYSLNEAIADVSVQKMSVSDTWKDLYRVIYNANIILDNVDGNDAISEEAQIDIMAEVKFIRALCYWHIVNLWGDAPFYTEPLVLEEIRVLGRTDEDTILSTVVSDLQYAQVHLASVYPEEDRGRASKWAAAIVEAKIHMQEQNWQAGLNKCMEIISQSPHSLLGNYADVFNPNNEYNSEIIWSLDFAKDIRGQFEEGTLGADGSFPSVFGNGNWRPSMFAPRLRDEPKNSSERNALAAALQANGEAFNGTGLQVASKDFAGKFPRNDYRRALNIVDNYLGFDLNFPYMAKIWNLDVDNSPRFNHSDNRIVFRLADVYLMAAECENELNGPANAFQYINKVRERAFATQTEWELKGLDQQGFREAIYDERKWELAGECHRRYDLIRWGILLDVVQDLEYRFWTPNTNIRPYHVKLPIPLQELQVNPVLLESDATNNGYR</sequence>
<accession>T2KNB8</accession>